<name>CCMF_PSEAE</name>
<proteinExistence type="inferred from homology"/>
<organism>
    <name type="scientific">Pseudomonas aeruginosa (strain ATCC 15692 / DSM 22644 / CIP 104116 / JCM 14847 / LMG 12228 / 1C / PRS 101 / PAO1)</name>
    <dbReference type="NCBI Taxonomy" id="208964"/>
    <lineage>
        <taxon>Bacteria</taxon>
        <taxon>Pseudomonadati</taxon>
        <taxon>Pseudomonadota</taxon>
        <taxon>Gammaproteobacteria</taxon>
        <taxon>Pseudomonadales</taxon>
        <taxon>Pseudomonadaceae</taxon>
        <taxon>Pseudomonas</taxon>
    </lineage>
</organism>
<feature type="chain" id="PRO_0000287764" description="Cytochrome c-type biogenesis protein CcmF">
    <location>
        <begin position="1"/>
        <end position="657"/>
    </location>
</feature>
<feature type="transmembrane region" description="Helical" evidence="2">
    <location>
        <begin position="8"/>
        <end position="28"/>
    </location>
</feature>
<feature type="transmembrane region" description="Helical" evidence="2">
    <location>
        <begin position="42"/>
        <end position="62"/>
    </location>
</feature>
<feature type="transmembrane region" description="Helical" evidence="2">
    <location>
        <begin position="94"/>
        <end position="114"/>
    </location>
</feature>
<feature type="transmembrane region" description="Helical" evidence="2">
    <location>
        <begin position="122"/>
        <end position="142"/>
    </location>
</feature>
<feature type="transmembrane region" description="Helical" evidence="2">
    <location>
        <begin position="176"/>
        <end position="196"/>
    </location>
</feature>
<feature type="transmembrane region" description="Helical" evidence="2">
    <location>
        <begin position="211"/>
        <end position="231"/>
    </location>
</feature>
<feature type="transmembrane region" description="Helical" evidence="2">
    <location>
        <begin position="245"/>
        <end position="265"/>
    </location>
</feature>
<feature type="transmembrane region" description="Helical" evidence="2">
    <location>
        <begin position="274"/>
        <end position="294"/>
    </location>
</feature>
<feature type="transmembrane region" description="Helical" evidence="2">
    <location>
        <begin position="312"/>
        <end position="332"/>
    </location>
</feature>
<feature type="transmembrane region" description="Helical" evidence="2">
    <location>
        <begin position="356"/>
        <end position="376"/>
    </location>
</feature>
<feature type="transmembrane region" description="Helical" evidence="2">
    <location>
        <begin position="391"/>
        <end position="411"/>
    </location>
</feature>
<feature type="transmembrane region" description="Helical" evidence="2">
    <location>
        <begin position="421"/>
        <end position="441"/>
    </location>
</feature>
<feature type="transmembrane region" description="Helical" evidence="2">
    <location>
        <begin position="444"/>
        <end position="464"/>
    </location>
</feature>
<feature type="transmembrane region" description="Helical" evidence="2">
    <location>
        <begin position="488"/>
        <end position="508"/>
    </location>
</feature>
<feature type="transmembrane region" description="Helical" evidence="2">
    <location>
        <begin position="614"/>
        <end position="634"/>
    </location>
</feature>
<protein>
    <recommendedName>
        <fullName>Cytochrome c-type biogenesis protein CcmF</fullName>
    </recommendedName>
</protein>
<comment type="function">
    <text evidence="1">Required for the biogenesis of c-type cytochromes. Possible subunit of a heme lyase (By similarity).</text>
</comment>
<comment type="subcellular location">
    <subcellularLocation>
        <location evidence="3">Cell inner membrane</location>
        <topology evidence="3">Multi-pass membrane protein</topology>
    </subcellularLocation>
</comment>
<comment type="similarity">
    <text evidence="3">Belongs to the CcmF/CycK/Ccl1/NrfE/CcsA family.</text>
</comment>
<evidence type="ECO:0000250" key="1"/>
<evidence type="ECO:0000255" key="2"/>
<evidence type="ECO:0000305" key="3"/>
<sequence length="657" mass="71666">MIPELGHLALILALCLALVQSSLPLVGAWRGDRQWMSLARPAAWGQFAFLAFAFGCLTWAFLRDDFSVAYVAGNSNSALPWYYKFSAVWGAHEGSLLLWALILGGWTFAVSIFSRQLPEVMLARVLAVMGMISTGFLLFLIITSNPFSRLLPQTPMDGNDLNPLLQDVGLIVHPPMLYMGYVGFSVAFAFAIAALLGGRLDAAWARWSRPWTLVAWAFLGIGIVLGSWWAYYELGWGGWWFWDPVENASFMPWLVGTALIHSLAVTEKRGVFKSWTVLLAIAAFSLSLLGTFLVRSGVLTSVHAFASDPERGVFILAFLLLVVGGSLTLFALRAPVVKSQVGFALWSRETLLLLNNLVLVVAASMILLGTLYPLLLDALSGAKLSVGPPYFNAMFLPLMAALMAALAVGVLVRWKDTPSRWLLGMLTPVLAASAVLAAAGSMYFGDFNWAVLAVFLLSAWVVLAGFRDFLDKTRHKGVLAGARSLTRSYWGMQLAHLGIAVCAIGIVLSSQYSAQRDLRMSPGDTVELGGYHFLFDGAKHHEGPNYTSDKGSIHVSRDGKEIATLHPEKRLYTVQSSMMTEAGIDAGFTRDLYVALGEPLENGAWAVRVHVKPFVRWIWFGGLLMGLGGALAALDRRYRVKVKTRVREALGLAGQGA</sequence>
<reference key="1">
    <citation type="journal article" date="2000" name="Nature">
        <title>Complete genome sequence of Pseudomonas aeruginosa PAO1, an opportunistic pathogen.</title>
        <authorList>
            <person name="Stover C.K."/>
            <person name="Pham X.-Q.T."/>
            <person name="Erwin A.L."/>
            <person name="Mizoguchi S.D."/>
            <person name="Warrener P."/>
            <person name="Hickey M.J."/>
            <person name="Brinkman F.S.L."/>
            <person name="Hufnagle W.O."/>
            <person name="Kowalik D.J."/>
            <person name="Lagrou M."/>
            <person name="Garber R.L."/>
            <person name="Goltry L."/>
            <person name="Tolentino E."/>
            <person name="Westbrock-Wadman S."/>
            <person name="Yuan Y."/>
            <person name="Brody L.L."/>
            <person name="Coulter S.N."/>
            <person name="Folger K.R."/>
            <person name="Kas A."/>
            <person name="Larbig K."/>
            <person name="Lim R.M."/>
            <person name="Smith K.A."/>
            <person name="Spencer D.H."/>
            <person name="Wong G.K.-S."/>
            <person name="Wu Z."/>
            <person name="Paulsen I.T."/>
            <person name="Reizer J."/>
            <person name="Saier M.H. Jr."/>
            <person name="Hancock R.E.W."/>
            <person name="Lory S."/>
            <person name="Olson M.V."/>
        </authorList>
    </citation>
    <scope>NUCLEOTIDE SEQUENCE [LARGE SCALE GENOMIC DNA]</scope>
    <source>
        <strain>ATCC 15692 / DSM 22644 / CIP 104116 / JCM 14847 / LMG 12228 / 1C / PRS 101 / PAO1</strain>
    </source>
</reference>
<dbReference type="EMBL" id="AE004091">
    <property type="protein sequence ID" value="AAG04869.1"/>
    <property type="molecule type" value="Genomic_DNA"/>
</dbReference>
<dbReference type="PIR" id="A83460">
    <property type="entry name" value="A83460"/>
</dbReference>
<dbReference type="RefSeq" id="NP_250171.1">
    <property type="nucleotide sequence ID" value="NC_002516.2"/>
</dbReference>
<dbReference type="RefSeq" id="WP_003114291.1">
    <property type="nucleotide sequence ID" value="NC_002516.2"/>
</dbReference>
<dbReference type="SMR" id="Q9I3N2"/>
<dbReference type="FunCoup" id="Q9I3N2">
    <property type="interactions" value="129"/>
</dbReference>
<dbReference type="STRING" id="208964.PA1480"/>
<dbReference type="TCDB" id="9.B.14.1.7">
    <property type="family name" value="the putative heme handling protein (hhp) family"/>
</dbReference>
<dbReference type="PaxDb" id="208964-PA1480"/>
<dbReference type="GeneID" id="881004"/>
<dbReference type="KEGG" id="pae:PA1480"/>
<dbReference type="PATRIC" id="fig|208964.12.peg.1531"/>
<dbReference type="PseudoCAP" id="PA1480"/>
<dbReference type="HOGENOM" id="CLU_015041_3_0_6"/>
<dbReference type="InParanoid" id="Q9I3N2"/>
<dbReference type="OrthoDB" id="9761451at2"/>
<dbReference type="PhylomeDB" id="Q9I3N2"/>
<dbReference type="BioCyc" id="PAER208964:G1FZ6-1506-MONOMER"/>
<dbReference type="Proteomes" id="UP000002438">
    <property type="component" value="Chromosome"/>
</dbReference>
<dbReference type="GO" id="GO:0005886">
    <property type="term" value="C:plasma membrane"/>
    <property type="evidence" value="ECO:0007669"/>
    <property type="project" value="UniProtKB-SubCell"/>
</dbReference>
<dbReference type="GO" id="GO:0004096">
    <property type="term" value="F:catalase activity"/>
    <property type="evidence" value="ECO:0000315"/>
    <property type="project" value="PseudoCAP"/>
</dbReference>
<dbReference type="GO" id="GO:0020037">
    <property type="term" value="F:heme binding"/>
    <property type="evidence" value="ECO:0007669"/>
    <property type="project" value="InterPro"/>
</dbReference>
<dbReference type="GO" id="GO:0015232">
    <property type="term" value="F:heme transmembrane transporter activity"/>
    <property type="evidence" value="ECO:0007669"/>
    <property type="project" value="InterPro"/>
</dbReference>
<dbReference type="GO" id="GO:0071978">
    <property type="term" value="P:bacterial-type flagellum-dependent swarming motility"/>
    <property type="evidence" value="ECO:0000315"/>
    <property type="project" value="PseudoCAP"/>
</dbReference>
<dbReference type="GO" id="GO:0071977">
    <property type="term" value="P:bacterial-type flagellum-dependent swimming motility"/>
    <property type="evidence" value="ECO:0000315"/>
    <property type="project" value="PseudoCAP"/>
</dbReference>
<dbReference type="GO" id="GO:0017004">
    <property type="term" value="P:cytochrome complex assembly"/>
    <property type="evidence" value="ECO:0007669"/>
    <property type="project" value="UniProtKB-KW"/>
</dbReference>
<dbReference type="GO" id="GO:0002049">
    <property type="term" value="P:pyoverdine biosynthetic process"/>
    <property type="evidence" value="ECO:0000315"/>
    <property type="project" value="PseudoCAP"/>
</dbReference>
<dbReference type="GO" id="GO:0043107">
    <property type="term" value="P:type IV pilus-dependent motility"/>
    <property type="evidence" value="ECO:0000315"/>
    <property type="project" value="PseudoCAP"/>
</dbReference>
<dbReference type="InterPro" id="IPR032523">
    <property type="entry name" value="CcmF_C"/>
</dbReference>
<dbReference type="InterPro" id="IPR002541">
    <property type="entry name" value="Cyt_c_assembly"/>
</dbReference>
<dbReference type="InterPro" id="IPR003567">
    <property type="entry name" value="Cyt_c_biogenesis"/>
</dbReference>
<dbReference type="InterPro" id="IPR003568">
    <property type="entry name" value="Cyt_c_biogenesis_CcmF"/>
</dbReference>
<dbReference type="NCBIfam" id="TIGR00353">
    <property type="entry name" value="nrfE"/>
    <property type="match status" value="1"/>
</dbReference>
<dbReference type="NCBIfam" id="NF007691">
    <property type="entry name" value="PRK10369.1"/>
    <property type="match status" value="1"/>
</dbReference>
<dbReference type="PANTHER" id="PTHR43653">
    <property type="entry name" value="CYTOCHROME C ASSEMBLY PROTEIN-RELATED"/>
    <property type="match status" value="1"/>
</dbReference>
<dbReference type="PANTHER" id="PTHR43653:SF1">
    <property type="entry name" value="CYTOCHROME C-TYPE BIOGENESIS PROTEIN CCMF"/>
    <property type="match status" value="1"/>
</dbReference>
<dbReference type="Pfam" id="PF16327">
    <property type="entry name" value="CcmF_C"/>
    <property type="match status" value="1"/>
</dbReference>
<dbReference type="Pfam" id="PF01578">
    <property type="entry name" value="Cytochrom_C_asm"/>
    <property type="match status" value="1"/>
</dbReference>
<dbReference type="PRINTS" id="PR01410">
    <property type="entry name" value="CCBIOGENESIS"/>
</dbReference>
<dbReference type="PRINTS" id="PR01411">
    <property type="entry name" value="CCMFBIOGNSIS"/>
</dbReference>
<gene>
    <name type="primary">ccmF</name>
    <name type="ordered locus">PA1480</name>
</gene>
<accession>Q9I3N2</accession>
<keyword id="KW-0997">Cell inner membrane</keyword>
<keyword id="KW-1003">Cell membrane</keyword>
<keyword id="KW-0201">Cytochrome c-type biogenesis</keyword>
<keyword id="KW-0472">Membrane</keyword>
<keyword id="KW-1185">Reference proteome</keyword>
<keyword id="KW-0812">Transmembrane</keyword>
<keyword id="KW-1133">Transmembrane helix</keyword>